<feature type="chain" id="PRO_1000021410" description="Ribonuclease P protein component">
    <location>
        <begin position="1"/>
        <end position="119"/>
    </location>
</feature>
<comment type="function">
    <text evidence="1">RNaseP catalyzes the removal of the 5'-leader sequence from pre-tRNA to produce the mature 5'-terminus. It can also cleave other RNA substrates such as 4.5S RNA. The protein component plays an auxiliary but essential role in vivo by binding to the 5'-leader sequence and broadening the substrate specificity of the ribozyme.</text>
</comment>
<comment type="catalytic activity">
    <reaction evidence="1">
        <text>Endonucleolytic cleavage of RNA, removing 5'-extranucleotides from tRNA precursor.</text>
        <dbReference type="EC" id="3.1.26.5"/>
    </reaction>
</comment>
<comment type="subunit">
    <text evidence="1">Consists of a catalytic RNA component (M1 or rnpB) and a protein subunit.</text>
</comment>
<comment type="similarity">
    <text evidence="1">Belongs to the RnpA family.</text>
</comment>
<evidence type="ECO:0000255" key="1">
    <source>
        <dbReference type="HAMAP-Rule" id="MF_00227"/>
    </source>
</evidence>
<reference key="1">
    <citation type="journal article" date="2005" name="J. Bacteriol.">
        <title>Genomic sequence of an otitis media isolate of nontypeable Haemophilus influenzae: comparative study with H. influenzae serotype d, strain KW20.</title>
        <authorList>
            <person name="Harrison A."/>
            <person name="Dyer D.W."/>
            <person name="Gillaspy A."/>
            <person name="Ray W.C."/>
            <person name="Mungur R."/>
            <person name="Carson M.B."/>
            <person name="Zhong H."/>
            <person name="Gipson J."/>
            <person name="Gipson M."/>
            <person name="Johnson L.S."/>
            <person name="Lewis L."/>
            <person name="Bakaletz L.O."/>
            <person name="Munson R.S. Jr."/>
        </authorList>
    </citation>
    <scope>NUCLEOTIDE SEQUENCE [LARGE SCALE GENOMIC DNA]</scope>
    <source>
        <strain>86-028NP</strain>
    </source>
</reference>
<name>RNPA_HAEI8</name>
<sequence length="119" mass="14081">MVKLNFSRELRLLTPIQFKNVFEQPFRASTPEITILARKNNLEHPRLGLTVAKKHLKRAHERNRIKRLVRESFRLSQHRLPAYDFVFVAKNGIGKLDNSAFAQILEKLWQRHIRLAQKS</sequence>
<organism>
    <name type="scientific">Haemophilus influenzae (strain 86-028NP)</name>
    <dbReference type="NCBI Taxonomy" id="281310"/>
    <lineage>
        <taxon>Bacteria</taxon>
        <taxon>Pseudomonadati</taxon>
        <taxon>Pseudomonadota</taxon>
        <taxon>Gammaproteobacteria</taxon>
        <taxon>Pasteurellales</taxon>
        <taxon>Pasteurellaceae</taxon>
        <taxon>Haemophilus</taxon>
    </lineage>
</organism>
<gene>
    <name evidence="1" type="primary">rnpA</name>
    <name type="ordered locus">NTHI1173</name>
</gene>
<protein>
    <recommendedName>
        <fullName evidence="1">Ribonuclease P protein component</fullName>
        <shortName evidence="1">RNase P protein</shortName>
        <shortName evidence="1">RNaseP protein</shortName>
        <ecNumber evidence="1">3.1.26.5</ecNumber>
    </recommendedName>
    <alternativeName>
        <fullName evidence="1">Protein C5</fullName>
    </alternativeName>
</protein>
<keyword id="KW-0255">Endonuclease</keyword>
<keyword id="KW-0378">Hydrolase</keyword>
<keyword id="KW-0540">Nuclease</keyword>
<keyword id="KW-0694">RNA-binding</keyword>
<keyword id="KW-0819">tRNA processing</keyword>
<accession>Q4QLR2</accession>
<proteinExistence type="inferred from homology"/>
<dbReference type="EC" id="3.1.26.5" evidence="1"/>
<dbReference type="EMBL" id="CP000057">
    <property type="protein sequence ID" value="AAX88035.1"/>
    <property type="molecule type" value="Genomic_DNA"/>
</dbReference>
<dbReference type="RefSeq" id="WP_005651622.1">
    <property type="nucleotide sequence ID" value="NC_007146.2"/>
</dbReference>
<dbReference type="SMR" id="Q4QLR2"/>
<dbReference type="GeneID" id="93220034"/>
<dbReference type="KEGG" id="hit:NTHI1173"/>
<dbReference type="HOGENOM" id="CLU_117179_11_0_6"/>
<dbReference type="Proteomes" id="UP000002525">
    <property type="component" value="Chromosome"/>
</dbReference>
<dbReference type="GO" id="GO:0030677">
    <property type="term" value="C:ribonuclease P complex"/>
    <property type="evidence" value="ECO:0007669"/>
    <property type="project" value="TreeGrafter"/>
</dbReference>
<dbReference type="GO" id="GO:0042781">
    <property type="term" value="F:3'-tRNA processing endoribonuclease activity"/>
    <property type="evidence" value="ECO:0007669"/>
    <property type="project" value="TreeGrafter"/>
</dbReference>
<dbReference type="GO" id="GO:0004526">
    <property type="term" value="F:ribonuclease P activity"/>
    <property type="evidence" value="ECO:0007669"/>
    <property type="project" value="UniProtKB-UniRule"/>
</dbReference>
<dbReference type="GO" id="GO:0000049">
    <property type="term" value="F:tRNA binding"/>
    <property type="evidence" value="ECO:0007669"/>
    <property type="project" value="UniProtKB-UniRule"/>
</dbReference>
<dbReference type="GO" id="GO:0001682">
    <property type="term" value="P:tRNA 5'-leader removal"/>
    <property type="evidence" value="ECO:0007669"/>
    <property type="project" value="UniProtKB-UniRule"/>
</dbReference>
<dbReference type="FunFam" id="3.30.230.10:FF:000016">
    <property type="entry name" value="Ribonuclease P protein component"/>
    <property type="match status" value="1"/>
</dbReference>
<dbReference type="Gene3D" id="3.30.230.10">
    <property type="match status" value="1"/>
</dbReference>
<dbReference type="HAMAP" id="MF_00227">
    <property type="entry name" value="RNase_P"/>
    <property type="match status" value="1"/>
</dbReference>
<dbReference type="InterPro" id="IPR020568">
    <property type="entry name" value="Ribosomal_Su5_D2-typ_SF"/>
</dbReference>
<dbReference type="InterPro" id="IPR014721">
    <property type="entry name" value="Ribsml_uS5_D2-typ_fold_subgr"/>
</dbReference>
<dbReference type="InterPro" id="IPR000100">
    <property type="entry name" value="RNase_P"/>
</dbReference>
<dbReference type="InterPro" id="IPR020539">
    <property type="entry name" value="RNase_P_CS"/>
</dbReference>
<dbReference type="NCBIfam" id="TIGR00188">
    <property type="entry name" value="rnpA"/>
    <property type="match status" value="1"/>
</dbReference>
<dbReference type="PANTHER" id="PTHR33992">
    <property type="entry name" value="RIBONUCLEASE P PROTEIN COMPONENT"/>
    <property type="match status" value="1"/>
</dbReference>
<dbReference type="PANTHER" id="PTHR33992:SF1">
    <property type="entry name" value="RIBONUCLEASE P PROTEIN COMPONENT"/>
    <property type="match status" value="1"/>
</dbReference>
<dbReference type="Pfam" id="PF00825">
    <property type="entry name" value="Ribonuclease_P"/>
    <property type="match status" value="1"/>
</dbReference>
<dbReference type="SUPFAM" id="SSF54211">
    <property type="entry name" value="Ribosomal protein S5 domain 2-like"/>
    <property type="match status" value="1"/>
</dbReference>
<dbReference type="PROSITE" id="PS00648">
    <property type="entry name" value="RIBONUCLEASE_P"/>
    <property type="match status" value="1"/>
</dbReference>